<reference key="1">
    <citation type="journal article" date="2007" name="PLoS Genet.">
        <title>Patterns and implications of gene gain and loss in the evolution of Prochlorococcus.</title>
        <authorList>
            <person name="Kettler G.C."/>
            <person name="Martiny A.C."/>
            <person name="Huang K."/>
            <person name="Zucker J."/>
            <person name="Coleman M.L."/>
            <person name="Rodrigue S."/>
            <person name="Chen F."/>
            <person name="Lapidus A."/>
            <person name="Ferriera S."/>
            <person name="Johnson J."/>
            <person name="Steglich C."/>
            <person name="Church G.M."/>
            <person name="Richardson P."/>
            <person name="Chisholm S.W."/>
        </authorList>
    </citation>
    <scope>NUCLEOTIDE SEQUENCE [LARGE SCALE GENOMIC DNA]</scope>
    <source>
        <strain>MIT 9211</strain>
    </source>
</reference>
<dbReference type="EMBL" id="CP000878">
    <property type="protein sequence ID" value="ABX09328.1"/>
    <property type="molecule type" value="Genomic_DNA"/>
</dbReference>
<dbReference type="RefSeq" id="WP_012195949.1">
    <property type="nucleotide sequence ID" value="NC_009976.1"/>
</dbReference>
<dbReference type="SMR" id="A9BBW6"/>
<dbReference type="STRING" id="93059.P9211_13971"/>
<dbReference type="KEGG" id="pmj:P9211_13971"/>
<dbReference type="eggNOG" id="COG4251">
    <property type="taxonomic scope" value="Bacteria"/>
</dbReference>
<dbReference type="HOGENOM" id="CLU_144073_0_0_3"/>
<dbReference type="OrthoDB" id="5458519at2"/>
<dbReference type="Proteomes" id="UP000000788">
    <property type="component" value="Chromosome"/>
</dbReference>
<dbReference type="GO" id="GO:0007623">
    <property type="term" value="P:circadian rhythm"/>
    <property type="evidence" value="ECO:0007669"/>
    <property type="project" value="UniProtKB-UniRule"/>
</dbReference>
<dbReference type="CDD" id="cd02978">
    <property type="entry name" value="KaiB_like"/>
    <property type="match status" value="1"/>
</dbReference>
<dbReference type="Gene3D" id="3.40.30.10">
    <property type="entry name" value="Glutaredoxin"/>
    <property type="match status" value="1"/>
</dbReference>
<dbReference type="HAMAP" id="MF_01835">
    <property type="entry name" value="KaiB"/>
    <property type="match status" value="1"/>
</dbReference>
<dbReference type="InterPro" id="IPR013474">
    <property type="entry name" value="Circ_KaiB"/>
</dbReference>
<dbReference type="InterPro" id="IPR039022">
    <property type="entry name" value="KaiB-like"/>
</dbReference>
<dbReference type="InterPro" id="IPR011649">
    <property type="entry name" value="KaiB_domain"/>
</dbReference>
<dbReference type="InterPro" id="IPR036249">
    <property type="entry name" value="Thioredoxin-like_sf"/>
</dbReference>
<dbReference type="NCBIfam" id="TIGR02654">
    <property type="entry name" value="circ_KaiB"/>
    <property type="match status" value="1"/>
</dbReference>
<dbReference type="NCBIfam" id="NF006798">
    <property type="entry name" value="PRK09301.1"/>
    <property type="match status" value="1"/>
</dbReference>
<dbReference type="PANTHER" id="PTHR41709:SF2">
    <property type="entry name" value="CIRCADIAN CLOCK PROTEIN KAIB2"/>
    <property type="match status" value="1"/>
</dbReference>
<dbReference type="PANTHER" id="PTHR41709">
    <property type="entry name" value="KAIB-LIKE PROTEIN 1"/>
    <property type="match status" value="1"/>
</dbReference>
<dbReference type="Pfam" id="PF07689">
    <property type="entry name" value="KaiB"/>
    <property type="match status" value="1"/>
</dbReference>
<dbReference type="SMART" id="SM01248">
    <property type="entry name" value="KaiB"/>
    <property type="match status" value="1"/>
</dbReference>
<dbReference type="SUPFAM" id="SSF52833">
    <property type="entry name" value="Thioredoxin-like"/>
    <property type="match status" value="1"/>
</dbReference>
<sequence>MSPRKTYILKLYVAGNTPNSMRALKTLHEILENEFKGVYALKVIDILKSPQLAEEDKILATPTLTKILPPPVRRIIGDLSDRERVLIGLDLLYEELSGNEFLSSIASPNSDEDN</sequence>
<name>KAIB_PROM4</name>
<evidence type="ECO:0000255" key="1">
    <source>
        <dbReference type="HAMAP-Rule" id="MF_01835"/>
    </source>
</evidence>
<protein>
    <recommendedName>
        <fullName evidence="1">Circadian clock oscillator protein KaiB</fullName>
    </recommendedName>
</protein>
<keyword id="KW-0090">Biological rhythms</keyword>
<keyword id="KW-1185">Reference proteome</keyword>
<proteinExistence type="inferred from homology"/>
<feature type="chain" id="PRO_1000188348" description="Circadian clock oscillator protein KaiB">
    <location>
        <begin position="1"/>
        <end position="114"/>
    </location>
</feature>
<accession>A9BBW6</accession>
<gene>
    <name evidence="1" type="primary">kaiB</name>
    <name type="ordered locus">P9211_13971</name>
</gene>
<organism>
    <name type="scientific">Prochlorococcus marinus (strain MIT 9211)</name>
    <dbReference type="NCBI Taxonomy" id="93059"/>
    <lineage>
        <taxon>Bacteria</taxon>
        <taxon>Bacillati</taxon>
        <taxon>Cyanobacteriota</taxon>
        <taxon>Cyanophyceae</taxon>
        <taxon>Synechococcales</taxon>
        <taxon>Prochlorococcaceae</taxon>
        <taxon>Prochlorococcus</taxon>
    </lineage>
</organism>
<comment type="function">
    <text evidence="1">Component of the KaiBC clock protein complex, which constitutes the main circadian regulator in cyanobacteria; it may modify the ATPase activity of KaiC.</text>
</comment>
<comment type="function">
    <text evidence="1">May be a metamorphic protein which reversibly switches between an inactive tetrameric fold and a rare, thioredoxin-like monomeric fold (KaiB(fs)). KaiB(fs) binds phospho-KaiC, and perhaps clock output effectors.</text>
</comment>
<comment type="subunit">
    <text evidence="1">May undergo a major conformational rearrangment; in the free state forms homooligomers. When bound to KaiC switches to a monomeric thioredoxin-fold (KaiB(fs)). The active oscillator complex is probably KaiC(6):KaiB(6).</text>
</comment>
<comment type="domain">
    <text evidence="1">Has 2 forms, fold switches to a thioredoxin-like fold (KaiB(fs)) when bound to KaiC.</text>
</comment>
<comment type="miscellaneous">
    <text evidence="1">The kiaA gene has been eliminated from Prochlorococcus during genome streamlining. It has been suggested that the central oscillator in Prochlorococcus does not have to be as robust as in other cyanobacteria because the former live in specific niches of the Earth's oceans; they divide exactly once a day and at the same time. Thus gene loss and changes in kaiB function compared to other cyanobacteria, can occur.</text>
</comment>
<comment type="similarity">
    <text evidence="1">Belongs to the KaiB family.</text>
</comment>